<accession>Q6NH03</accession>
<proteinExistence type="inferred from homology"/>
<reference key="1">
    <citation type="journal article" date="2003" name="Nucleic Acids Res.">
        <title>The complete genome sequence and analysis of Corynebacterium diphtheriae NCTC13129.</title>
        <authorList>
            <person name="Cerdeno-Tarraga A.-M."/>
            <person name="Efstratiou A."/>
            <person name="Dover L.G."/>
            <person name="Holden M.T.G."/>
            <person name="Pallen M.J."/>
            <person name="Bentley S.D."/>
            <person name="Besra G.S."/>
            <person name="Churcher C.M."/>
            <person name="James K.D."/>
            <person name="De Zoysa A."/>
            <person name="Chillingworth T."/>
            <person name="Cronin A."/>
            <person name="Dowd L."/>
            <person name="Feltwell T."/>
            <person name="Hamlin N."/>
            <person name="Holroyd S."/>
            <person name="Jagels K."/>
            <person name="Moule S."/>
            <person name="Quail M.A."/>
            <person name="Rabbinowitsch E."/>
            <person name="Rutherford K.M."/>
            <person name="Thomson N.R."/>
            <person name="Unwin L."/>
            <person name="Whitehead S."/>
            <person name="Barrell B.G."/>
            <person name="Parkhill J."/>
        </authorList>
    </citation>
    <scope>NUCLEOTIDE SEQUENCE [LARGE SCALE GENOMIC DNA]</scope>
    <source>
        <strain>ATCC 700971 / NCTC 13129 / Biotype gravis</strain>
    </source>
</reference>
<sequence length="173" mass="18773">MSGRVRPIVVLVGPPGSGKTTIGRRLANALNTSVVDSDVLIEQLQGKPCGVVFAELGEPNFRDLEAEVIDFALTTAGVVSLGGGAVTTESVRQKLRAQIVVWVDVSAAEGVRRTAVENSRPLLDTTNPLERYSELLAQRRDFYKEVADYRAHTDGRSPQQIVADILGFLETLR</sequence>
<protein>
    <recommendedName>
        <fullName evidence="1">Shikimate kinase</fullName>
        <shortName evidence="1">SK</shortName>
        <ecNumber evidence="1">2.7.1.71</ecNumber>
    </recommendedName>
</protein>
<gene>
    <name evidence="1" type="primary">aroK</name>
    <name type="ordered locus">DIP1344</name>
</gene>
<name>AROK_CORDI</name>
<comment type="function">
    <text evidence="1">Catalyzes the specific phosphorylation of the 3-hydroxyl group of shikimic acid using ATP as a cosubstrate.</text>
</comment>
<comment type="catalytic activity">
    <reaction evidence="1">
        <text>shikimate + ATP = 3-phosphoshikimate + ADP + H(+)</text>
        <dbReference type="Rhea" id="RHEA:13121"/>
        <dbReference type="ChEBI" id="CHEBI:15378"/>
        <dbReference type="ChEBI" id="CHEBI:30616"/>
        <dbReference type="ChEBI" id="CHEBI:36208"/>
        <dbReference type="ChEBI" id="CHEBI:145989"/>
        <dbReference type="ChEBI" id="CHEBI:456216"/>
        <dbReference type="EC" id="2.7.1.71"/>
    </reaction>
</comment>
<comment type="cofactor">
    <cofactor evidence="1">
        <name>Mg(2+)</name>
        <dbReference type="ChEBI" id="CHEBI:18420"/>
    </cofactor>
    <text evidence="1">Binds 1 Mg(2+) ion per subunit.</text>
</comment>
<comment type="pathway">
    <text evidence="1">Metabolic intermediate biosynthesis; chorismate biosynthesis; chorismate from D-erythrose 4-phosphate and phosphoenolpyruvate: step 5/7.</text>
</comment>
<comment type="subunit">
    <text evidence="1">Monomer.</text>
</comment>
<comment type="subcellular location">
    <subcellularLocation>
        <location evidence="1">Cytoplasm</location>
    </subcellularLocation>
</comment>
<comment type="similarity">
    <text evidence="1">Belongs to the shikimate kinase family.</text>
</comment>
<evidence type="ECO:0000255" key="1">
    <source>
        <dbReference type="HAMAP-Rule" id="MF_00109"/>
    </source>
</evidence>
<feature type="chain" id="PRO_0000237867" description="Shikimate kinase">
    <location>
        <begin position="1"/>
        <end position="173"/>
    </location>
</feature>
<feature type="binding site" evidence="1">
    <location>
        <begin position="16"/>
        <end position="21"/>
    </location>
    <ligand>
        <name>ATP</name>
        <dbReference type="ChEBI" id="CHEBI:30616"/>
    </ligand>
</feature>
<feature type="binding site" evidence="1">
    <location>
        <position position="20"/>
    </location>
    <ligand>
        <name>Mg(2+)</name>
        <dbReference type="ChEBI" id="CHEBI:18420"/>
    </ligand>
</feature>
<feature type="binding site" evidence="1">
    <location>
        <position position="38"/>
    </location>
    <ligand>
        <name>substrate</name>
    </ligand>
</feature>
<feature type="binding site" evidence="1">
    <location>
        <position position="62"/>
    </location>
    <ligand>
        <name>substrate</name>
    </ligand>
</feature>
<feature type="binding site" evidence="1">
    <location>
        <position position="83"/>
    </location>
    <ligand>
        <name>substrate</name>
    </ligand>
</feature>
<feature type="binding site" evidence="1">
    <location>
        <position position="120"/>
    </location>
    <ligand>
        <name>ATP</name>
        <dbReference type="ChEBI" id="CHEBI:30616"/>
    </ligand>
</feature>
<feature type="binding site" evidence="1">
    <location>
        <position position="139"/>
    </location>
    <ligand>
        <name>substrate</name>
    </ligand>
</feature>
<feature type="binding site" evidence="1">
    <location>
        <position position="156"/>
    </location>
    <ligand>
        <name>ATP</name>
        <dbReference type="ChEBI" id="CHEBI:30616"/>
    </ligand>
</feature>
<organism>
    <name type="scientific">Corynebacterium diphtheriae (strain ATCC 700971 / NCTC 13129 / Biotype gravis)</name>
    <dbReference type="NCBI Taxonomy" id="257309"/>
    <lineage>
        <taxon>Bacteria</taxon>
        <taxon>Bacillati</taxon>
        <taxon>Actinomycetota</taxon>
        <taxon>Actinomycetes</taxon>
        <taxon>Mycobacteriales</taxon>
        <taxon>Corynebacteriaceae</taxon>
        <taxon>Corynebacterium</taxon>
    </lineage>
</organism>
<dbReference type="EC" id="2.7.1.71" evidence="1"/>
<dbReference type="EMBL" id="BX248357">
    <property type="protein sequence ID" value="CAE49872.1"/>
    <property type="molecule type" value="Genomic_DNA"/>
</dbReference>
<dbReference type="SMR" id="Q6NH03"/>
<dbReference type="STRING" id="257309.DIP1344"/>
<dbReference type="KEGG" id="cdi:DIP1344"/>
<dbReference type="HOGENOM" id="CLU_057607_3_0_11"/>
<dbReference type="UniPathway" id="UPA00053">
    <property type="reaction ID" value="UER00088"/>
</dbReference>
<dbReference type="Proteomes" id="UP000002198">
    <property type="component" value="Chromosome"/>
</dbReference>
<dbReference type="GO" id="GO:0005829">
    <property type="term" value="C:cytosol"/>
    <property type="evidence" value="ECO:0007669"/>
    <property type="project" value="TreeGrafter"/>
</dbReference>
<dbReference type="GO" id="GO:0005524">
    <property type="term" value="F:ATP binding"/>
    <property type="evidence" value="ECO:0007669"/>
    <property type="project" value="UniProtKB-UniRule"/>
</dbReference>
<dbReference type="GO" id="GO:0000287">
    <property type="term" value="F:magnesium ion binding"/>
    <property type="evidence" value="ECO:0007669"/>
    <property type="project" value="UniProtKB-UniRule"/>
</dbReference>
<dbReference type="GO" id="GO:0004765">
    <property type="term" value="F:shikimate kinase activity"/>
    <property type="evidence" value="ECO:0007669"/>
    <property type="project" value="UniProtKB-UniRule"/>
</dbReference>
<dbReference type="GO" id="GO:0008652">
    <property type="term" value="P:amino acid biosynthetic process"/>
    <property type="evidence" value="ECO:0007669"/>
    <property type="project" value="UniProtKB-KW"/>
</dbReference>
<dbReference type="GO" id="GO:0009073">
    <property type="term" value="P:aromatic amino acid family biosynthetic process"/>
    <property type="evidence" value="ECO:0007669"/>
    <property type="project" value="UniProtKB-KW"/>
</dbReference>
<dbReference type="GO" id="GO:0009423">
    <property type="term" value="P:chorismate biosynthetic process"/>
    <property type="evidence" value="ECO:0007669"/>
    <property type="project" value="UniProtKB-UniRule"/>
</dbReference>
<dbReference type="CDD" id="cd00464">
    <property type="entry name" value="SK"/>
    <property type="match status" value="1"/>
</dbReference>
<dbReference type="Gene3D" id="3.40.50.300">
    <property type="entry name" value="P-loop containing nucleotide triphosphate hydrolases"/>
    <property type="match status" value="1"/>
</dbReference>
<dbReference type="HAMAP" id="MF_00109">
    <property type="entry name" value="Shikimate_kinase"/>
    <property type="match status" value="1"/>
</dbReference>
<dbReference type="InterPro" id="IPR027417">
    <property type="entry name" value="P-loop_NTPase"/>
</dbReference>
<dbReference type="InterPro" id="IPR031322">
    <property type="entry name" value="Shikimate/glucono_kinase"/>
</dbReference>
<dbReference type="InterPro" id="IPR000623">
    <property type="entry name" value="Shikimate_kinase/TSH1"/>
</dbReference>
<dbReference type="InterPro" id="IPR023000">
    <property type="entry name" value="Shikimate_kinase_CS"/>
</dbReference>
<dbReference type="PANTHER" id="PTHR21087">
    <property type="entry name" value="SHIKIMATE KINASE"/>
    <property type="match status" value="1"/>
</dbReference>
<dbReference type="PANTHER" id="PTHR21087:SF16">
    <property type="entry name" value="SHIKIMATE KINASE 1, CHLOROPLASTIC"/>
    <property type="match status" value="1"/>
</dbReference>
<dbReference type="Pfam" id="PF01202">
    <property type="entry name" value="SKI"/>
    <property type="match status" value="1"/>
</dbReference>
<dbReference type="PRINTS" id="PR01100">
    <property type="entry name" value="SHIKIMTKNASE"/>
</dbReference>
<dbReference type="SUPFAM" id="SSF52540">
    <property type="entry name" value="P-loop containing nucleoside triphosphate hydrolases"/>
    <property type="match status" value="1"/>
</dbReference>
<dbReference type="PROSITE" id="PS01128">
    <property type="entry name" value="SHIKIMATE_KINASE"/>
    <property type="match status" value="1"/>
</dbReference>
<keyword id="KW-0028">Amino-acid biosynthesis</keyword>
<keyword id="KW-0057">Aromatic amino acid biosynthesis</keyword>
<keyword id="KW-0067">ATP-binding</keyword>
<keyword id="KW-0963">Cytoplasm</keyword>
<keyword id="KW-0418">Kinase</keyword>
<keyword id="KW-0460">Magnesium</keyword>
<keyword id="KW-0479">Metal-binding</keyword>
<keyword id="KW-0547">Nucleotide-binding</keyword>
<keyword id="KW-1185">Reference proteome</keyword>
<keyword id="KW-0808">Transferase</keyword>